<reference key="1">
    <citation type="submission" date="2007-11" db="EMBL/GenBank/DDBJ databases">
        <title>Complete sequence of chromosome of Shewanella baltica OS195.</title>
        <authorList>
            <consortium name="US DOE Joint Genome Institute"/>
            <person name="Copeland A."/>
            <person name="Lucas S."/>
            <person name="Lapidus A."/>
            <person name="Barry K."/>
            <person name="Glavina del Rio T."/>
            <person name="Dalin E."/>
            <person name="Tice H."/>
            <person name="Pitluck S."/>
            <person name="Chain P."/>
            <person name="Malfatti S."/>
            <person name="Shin M."/>
            <person name="Vergez L."/>
            <person name="Schmutz J."/>
            <person name="Larimer F."/>
            <person name="Land M."/>
            <person name="Hauser L."/>
            <person name="Kyrpides N."/>
            <person name="Kim E."/>
            <person name="Brettar I."/>
            <person name="Rodrigues J."/>
            <person name="Konstantinidis K."/>
            <person name="Klappenbach J."/>
            <person name="Hofle M."/>
            <person name="Tiedje J."/>
            <person name="Richardson P."/>
        </authorList>
    </citation>
    <scope>NUCLEOTIDE SEQUENCE [LARGE SCALE GENOMIC DNA]</scope>
    <source>
        <strain>OS195</strain>
    </source>
</reference>
<organism>
    <name type="scientific">Shewanella baltica (strain OS195)</name>
    <dbReference type="NCBI Taxonomy" id="399599"/>
    <lineage>
        <taxon>Bacteria</taxon>
        <taxon>Pseudomonadati</taxon>
        <taxon>Pseudomonadota</taxon>
        <taxon>Gammaproteobacteria</taxon>
        <taxon>Alteromonadales</taxon>
        <taxon>Shewanellaceae</taxon>
        <taxon>Shewanella</taxon>
    </lineage>
</organism>
<feature type="chain" id="PRO_0000359342" description="5'-methylthioadenosine/S-adenosylhomocysteine nucleosidase">
    <location>
        <begin position="1"/>
        <end position="236"/>
    </location>
</feature>
<feature type="active site" description="Proton acceptor" evidence="1">
    <location>
        <position position="12"/>
    </location>
</feature>
<feature type="active site" description="Proton donor" evidence="1">
    <location>
        <position position="198"/>
    </location>
</feature>
<feature type="binding site" evidence="1">
    <location>
        <position position="78"/>
    </location>
    <ligand>
        <name>substrate</name>
    </ligand>
</feature>
<feature type="binding site" evidence="1">
    <location>
        <position position="153"/>
    </location>
    <ligand>
        <name>substrate</name>
    </ligand>
</feature>
<feature type="binding site" evidence="1">
    <location>
        <begin position="174"/>
        <end position="175"/>
    </location>
    <ligand>
        <name>substrate</name>
    </ligand>
</feature>
<dbReference type="EC" id="3.2.2.9" evidence="1"/>
<dbReference type="EMBL" id="CP000891">
    <property type="protein sequence ID" value="ABX48428.1"/>
    <property type="molecule type" value="Genomic_DNA"/>
</dbReference>
<dbReference type="RefSeq" id="WP_006085054.1">
    <property type="nucleotide sequence ID" value="NC_009997.1"/>
</dbReference>
<dbReference type="SMR" id="A9L5L1"/>
<dbReference type="KEGG" id="sbn:Sbal195_1253"/>
<dbReference type="HOGENOM" id="CLU_031248_2_2_6"/>
<dbReference type="UniPathway" id="UPA00904">
    <property type="reaction ID" value="UER00871"/>
</dbReference>
<dbReference type="Proteomes" id="UP000000770">
    <property type="component" value="Chromosome"/>
</dbReference>
<dbReference type="GO" id="GO:0005829">
    <property type="term" value="C:cytosol"/>
    <property type="evidence" value="ECO:0007669"/>
    <property type="project" value="TreeGrafter"/>
</dbReference>
<dbReference type="GO" id="GO:0008782">
    <property type="term" value="F:adenosylhomocysteine nucleosidase activity"/>
    <property type="evidence" value="ECO:0007669"/>
    <property type="project" value="UniProtKB-UniRule"/>
</dbReference>
<dbReference type="GO" id="GO:0008930">
    <property type="term" value="F:methylthioadenosine nucleosidase activity"/>
    <property type="evidence" value="ECO:0007669"/>
    <property type="project" value="UniProtKB-UniRule"/>
</dbReference>
<dbReference type="GO" id="GO:0019509">
    <property type="term" value="P:L-methionine salvage from methylthioadenosine"/>
    <property type="evidence" value="ECO:0007669"/>
    <property type="project" value="UniProtKB-UniRule"/>
</dbReference>
<dbReference type="GO" id="GO:0019284">
    <property type="term" value="P:L-methionine salvage from S-adenosylmethionine"/>
    <property type="evidence" value="ECO:0007669"/>
    <property type="project" value="TreeGrafter"/>
</dbReference>
<dbReference type="GO" id="GO:0009164">
    <property type="term" value="P:nucleoside catabolic process"/>
    <property type="evidence" value="ECO:0007669"/>
    <property type="project" value="InterPro"/>
</dbReference>
<dbReference type="CDD" id="cd09008">
    <property type="entry name" value="MTAN"/>
    <property type="match status" value="1"/>
</dbReference>
<dbReference type="FunFam" id="3.40.50.1580:FF:000001">
    <property type="entry name" value="MTA/SAH nucleosidase family protein"/>
    <property type="match status" value="1"/>
</dbReference>
<dbReference type="Gene3D" id="3.40.50.1580">
    <property type="entry name" value="Nucleoside phosphorylase domain"/>
    <property type="match status" value="1"/>
</dbReference>
<dbReference type="HAMAP" id="MF_01684">
    <property type="entry name" value="Salvage_MtnN"/>
    <property type="match status" value="1"/>
</dbReference>
<dbReference type="InterPro" id="IPR010049">
    <property type="entry name" value="MTA_SAH_Nsdase"/>
</dbReference>
<dbReference type="InterPro" id="IPR000845">
    <property type="entry name" value="Nucleoside_phosphorylase_d"/>
</dbReference>
<dbReference type="InterPro" id="IPR035994">
    <property type="entry name" value="Nucleoside_phosphorylase_sf"/>
</dbReference>
<dbReference type="NCBIfam" id="TIGR01704">
    <property type="entry name" value="MTA_SAH-Nsdase"/>
    <property type="match status" value="1"/>
</dbReference>
<dbReference type="NCBIfam" id="NF004079">
    <property type="entry name" value="PRK05584.1"/>
    <property type="match status" value="1"/>
</dbReference>
<dbReference type="PANTHER" id="PTHR46832">
    <property type="entry name" value="5'-METHYLTHIOADENOSINE/S-ADENOSYLHOMOCYSTEINE NUCLEOSIDASE"/>
    <property type="match status" value="1"/>
</dbReference>
<dbReference type="PANTHER" id="PTHR46832:SF1">
    <property type="entry name" value="5'-METHYLTHIOADENOSINE_S-ADENOSYLHOMOCYSTEINE NUCLEOSIDASE"/>
    <property type="match status" value="1"/>
</dbReference>
<dbReference type="Pfam" id="PF01048">
    <property type="entry name" value="PNP_UDP_1"/>
    <property type="match status" value="1"/>
</dbReference>
<dbReference type="SUPFAM" id="SSF53167">
    <property type="entry name" value="Purine and uridine phosphorylases"/>
    <property type="match status" value="1"/>
</dbReference>
<name>MTNN_SHEB9</name>
<proteinExistence type="inferred from homology"/>
<accession>A9L5L1</accession>
<evidence type="ECO:0000255" key="1">
    <source>
        <dbReference type="HAMAP-Rule" id="MF_01684"/>
    </source>
</evidence>
<keyword id="KW-0028">Amino-acid biosynthesis</keyword>
<keyword id="KW-0378">Hydrolase</keyword>
<keyword id="KW-0486">Methionine biosynthesis</keyword>
<protein>
    <recommendedName>
        <fullName evidence="1">5'-methylthioadenosine/S-adenosylhomocysteine nucleosidase</fullName>
        <shortName evidence="1">MTA/SAH nucleosidase</shortName>
        <shortName evidence="1">MTAN</shortName>
        <ecNumber evidence="1">3.2.2.9</ecNumber>
    </recommendedName>
    <alternativeName>
        <fullName evidence="1">5'-deoxyadenosine nucleosidase</fullName>
        <shortName evidence="1">DOA nucleosidase</shortName>
        <shortName evidence="1">dAdo nucleosidase</shortName>
    </alternativeName>
    <alternativeName>
        <fullName evidence="1">5'-methylthioadenosine nucleosidase</fullName>
        <shortName evidence="1">MTA nucleosidase</shortName>
    </alternativeName>
    <alternativeName>
        <fullName evidence="1">S-adenosylhomocysteine nucleosidase</fullName>
        <shortName evidence="1">AdoHcy nucleosidase</shortName>
        <shortName evidence="1">SAH nucleosidase</shortName>
        <shortName evidence="1">SRH nucleosidase</shortName>
    </alternativeName>
</protein>
<gene>
    <name evidence="1" type="primary">mtnN</name>
    <name type="ordered locus">Sbal195_1253</name>
</gene>
<sequence length="236" mass="24630">MKIGIIGAMEPEVAHLIAAMTNATSQTIAGIEFIAGTLAGKDVVVTRSGIGKVAASIATTLLIEKYAPDAVINTGSAGGFVDTLAIGDIVISSEVRHHDVDVTAFGYEIGQMAQQPAAFIPAAHLVEAANKAIAQLGEVKAIEGLICTGDSFICDPVRTQAMLKNFPTMAACEMEGAAIAQVCHQFGVPFVVIRSLSDNANNDSPVDFDSYIVKAGYHSALMVMLLLEQLNPSAVK</sequence>
<comment type="function">
    <text evidence="1">Catalyzes the irreversible cleavage of the glycosidic bond in both 5'-methylthioadenosine (MTA) and S-adenosylhomocysteine (SAH/AdoHcy) to adenine and the corresponding thioribose, 5'-methylthioribose and S-ribosylhomocysteine, respectively. Also cleaves 5'-deoxyadenosine, a toxic by-product of radical S-adenosylmethionine (SAM) enzymes, into 5-deoxyribose and adenine.</text>
</comment>
<comment type="catalytic activity">
    <reaction evidence="1">
        <text>S-adenosyl-L-homocysteine + H2O = S-(5-deoxy-D-ribos-5-yl)-L-homocysteine + adenine</text>
        <dbReference type="Rhea" id="RHEA:17805"/>
        <dbReference type="ChEBI" id="CHEBI:15377"/>
        <dbReference type="ChEBI" id="CHEBI:16708"/>
        <dbReference type="ChEBI" id="CHEBI:57856"/>
        <dbReference type="ChEBI" id="CHEBI:58195"/>
        <dbReference type="EC" id="3.2.2.9"/>
    </reaction>
</comment>
<comment type="catalytic activity">
    <reaction evidence="1">
        <text>S-methyl-5'-thioadenosine + H2O = 5-(methylsulfanyl)-D-ribose + adenine</text>
        <dbReference type="Rhea" id="RHEA:13617"/>
        <dbReference type="ChEBI" id="CHEBI:15377"/>
        <dbReference type="ChEBI" id="CHEBI:16708"/>
        <dbReference type="ChEBI" id="CHEBI:17509"/>
        <dbReference type="ChEBI" id="CHEBI:78440"/>
        <dbReference type="EC" id="3.2.2.9"/>
    </reaction>
</comment>
<comment type="catalytic activity">
    <reaction evidence="1">
        <text>5'-deoxyadenosine + H2O = 5-deoxy-D-ribose + adenine</text>
        <dbReference type="Rhea" id="RHEA:29859"/>
        <dbReference type="ChEBI" id="CHEBI:15377"/>
        <dbReference type="ChEBI" id="CHEBI:16708"/>
        <dbReference type="ChEBI" id="CHEBI:17319"/>
        <dbReference type="ChEBI" id="CHEBI:149540"/>
        <dbReference type="EC" id="3.2.2.9"/>
    </reaction>
    <physiologicalReaction direction="left-to-right" evidence="1">
        <dbReference type="Rhea" id="RHEA:29860"/>
    </physiologicalReaction>
</comment>
<comment type="pathway">
    <text evidence="1">Amino-acid biosynthesis; L-methionine biosynthesis via salvage pathway; S-methyl-5-thio-alpha-D-ribose 1-phosphate from S-methyl-5'-thioadenosine (hydrolase route): step 1/2.</text>
</comment>
<comment type="similarity">
    <text evidence="1">Belongs to the PNP/UDP phosphorylase family. MtnN subfamily.</text>
</comment>